<organismHost>
    <name type="scientific">Oryctolagus cuniculus</name>
    <name type="common">Rabbit</name>
    <dbReference type="NCBI Taxonomy" id="9986"/>
</organismHost>
<feature type="chain" id="PRO_0000099144" description="DNA-directed RNA polymerase 21 kDa subunit">
    <location>
        <begin position="1"/>
        <end position="185"/>
    </location>
</feature>
<protein>
    <recommendedName>
        <fullName>DNA-directed RNA polymerase 21 kDa subunit</fullName>
        <ecNumber>2.7.7.6</ecNumber>
    </recommendedName>
</protein>
<comment type="function">
    <text evidence="1">Part of the DNA-dependent RNA polymerase which catalyzes the transcription of viral DNA into RNA using the four ribonucleoside triphosphates as substrates. Responsible for the transcription of early, intermediate and late genes. DNA-dependent RNA polymerase associates with the early transcription factor (ETF), itself composed of OPG118 and OPG133, thereby allowing the early genes transcription. Late transcription, and probably also intermediate transcription, require newly synthesized RNA polymerase.</text>
</comment>
<comment type="catalytic activity">
    <reaction evidence="1">
        <text>RNA(n) + a ribonucleoside 5'-triphosphate = RNA(n+1) + diphosphate</text>
        <dbReference type="Rhea" id="RHEA:21248"/>
        <dbReference type="Rhea" id="RHEA-COMP:14527"/>
        <dbReference type="Rhea" id="RHEA-COMP:17342"/>
        <dbReference type="ChEBI" id="CHEBI:33019"/>
        <dbReference type="ChEBI" id="CHEBI:61557"/>
        <dbReference type="ChEBI" id="CHEBI:140395"/>
        <dbReference type="EC" id="2.7.7.6"/>
    </reaction>
</comment>
<comment type="subunit">
    <text evidence="1">The DNA-dependent RNA polymerase used for intermediate and late genes expression consists of eight subunits Rpo30/OPG66, Rpo7/OPG90, Rpo22/OPG103, Rpo147/OPG105, Rpo18/OPG119, Rpo19/OPG131, Rpo132/OPG151 and Rpo35/OPG156. The same holoenzyme, with the addition of the transcription-specificity factor OPG109, is used for early gene expression.</text>
</comment>
<comment type="subcellular location">
    <subcellularLocation>
        <location evidence="1">Virion</location>
    </subcellularLocation>
    <text evidence="1">All the enzymes and other proteins required to synthesize early mRNAs are packaged within the virion core along with the DNA genome. This is necessary because viral early mRNAs are synthesized within minutes after virus entry into the cell and are extruded through pores in the core particle.</text>
</comment>
<comment type="similarity">
    <text evidence="2">Belongs to the poxviridae DNA-directed RNA polymerase 22 kDa subunit family.</text>
</comment>
<dbReference type="EC" id="2.7.7.6"/>
<dbReference type="EMBL" id="X17347">
    <property type="protein sequence ID" value="CAA35230.1"/>
    <property type="molecule type" value="Genomic_DNA"/>
</dbReference>
<dbReference type="PIR" id="S11242">
    <property type="entry name" value="S11242"/>
</dbReference>
<dbReference type="SMR" id="P68547"/>
<dbReference type="KEGG" id="vg:932185"/>
<dbReference type="GO" id="GO:0000428">
    <property type="term" value="C:DNA-directed RNA polymerase complex"/>
    <property type="evidence" value="ECO:0007669"/>
    <property type="project" value="UniProtKB-KW"/>
</dbReference>
<dbReference type="GO" id="GO:0044423">
    <property type="term" value="C:virion component"/>
    <property type="evidence" value="ECO:0007669"/>
    <property type="project" value="UniProtKB-KW"/>
</dbReference>
<dbReference type="GO" id="GO:0003677">
    <property type="term" value="F:DNA binding"/>
    <property type="evidence" value="ECO:0007669"/>
    <property type="project" value="InterPro"/>
</dbReference>
<dbReference type="GO" id="GO:0003899">
    <property type="term" value="F:DNA-directed RNA polymerase activity"/>
    <property type="evidence" value="ECO:0007669"/>
    <property type="project" value="UniProtKB-EC"/>
</dbReference>
<dbReference type="GO" id="GO:0019083">
    <property type="term" value="P:viral transcription"/>
    <property type="evidence" value="ECO:0007669"/>
    <property type="project" value="InterPro"/>
</dbReference>
<dbReference type="InterPro" id="IPR007937">
    <property type="entry name" value="RNA_Pol_22kDa_poxvir"/>
</dbReference>
<dbReference type="Pfam" id="PF05273">
    <property type="entry name" value="Pox_RNA_Pol_22"/>
    <property type="match status" value="1"/>
</dbReference>
<dbReference type="PIRSF" id="PIRSF000744">
    <property type="entry name" value="RPO22"/>
    <property type="match status" value="1"/>
</dbReference>
<proteinExistence type="inferred from homology"/>
<organism>
    <name type="scientific">Myxoma virus (strain Uriarra)</name>
    <name type="common">MYXV</name>
    <dbReference type="NCBI Taxonomy" id="265876"/>
    <lineage>
        <taxon>Viruses</taxon>
        <taxon>Varidnaviria</taxon>
        <taxon>Bamfordvirae</taxon>
        <taxon>Nucleocytoviricota</taxon>
        <taxon>Pokkesviricetes</taxon>
        <taxon>Chitovirales</taxon>
        <taxon>Poxviridae</taxon>
        <taxon>Chordopoxvirinae</taxon>
        <taxon>Leporipoxvirus</taxon>
        <taxon>Myxoma virus</taxon>
    </lineage>
</organism>
<gene>
    <name type="primary">OPG103</name>
    <name type="synonym">POLR21</name>
    <name type="synonym">RPO22</name>
    <name type="ORF">F10</name>
</gene>
<evidence type="ECO:0000250" key="1">
    <source>
        <dbReference type="UniProtKB" id="P68609"/>
    </source>
</evidence>
<evidence type="ECO:0000305" key="2"/>
<name>RP22_MYXVU</name>
<accession>P68547</accession>
<accession>P18620</accession>
<sequence length="185" mass="21026">MNPHNVKYLAKILCLKAEIQKNPYAVISKDVVHRYSTDIRYGDLTTIISVRHKTSTSNTVFQVFNESSVNYTPVDNDYGYPIIITSFLQTGHNKFPISFLYIDVVASDVFPKFARLSPTDVATVYSVLQIGDTKDALKLPRMLETEISAKILFHKDFPLKIVRFFKNNMVTGEEISDRSLVAVLE</sequence>
<reference key="1">
    <citation type="journal article" date="1990" name="Nucleic Acids Res.">
        <title>A myxoma virus nucleotide sequence with homology to the vaccinia virus RNA polymerase 22-kDa subunit gene.</title>
        <authorList>
            <person name="Jackson R.J."/>
            <person name="Bults G.H."/>
        </authorList>
    </citation>
    <scope>NUCLEOTIDE SEQUENCE [GENOMIC DNA]</scope>
</reference>
<keyword id="KW-0240">DNA-directed RNA polymerase</keyword>
<keyword id="KW-0548">Nucleotidyltransferase</keyword>
<keyword id="KW-0804">Transcription</keyword>
<keyword id="KW-0808">Transferase</keyword>
<keyword id="KW-0946">Virion</keyword>